<sequence length="125" mass="14498">MAPLKKGGEKKKGRSAINEVVTREYTINVHKRIHGISFKKRAPRAIKEIRKFAMKEMGTPDVRIDTRLNKAVWAKGVRNVPYRMRVRLSRKRNEDEDSPNKLYTLVTYVPVTTYKGLQTVNVDEN</sequence>
<name>RL31_ICTPU</name>
<reference key="1">
    <citation type="journal article" date="2003" name="Gene">
        <title>Translational machinery of channel catfish: II. Complementary DNA and expression of the complete set of 47 60S ribosomal proteins.</title>
        <authorList>
            <person name="Patterson A.P."/>
            <person name="Karsi A."/>
            <person name="Feng J."/>
            <person name="Liu Z.J."/>
        </authorList>
    </citation>
    <scope>NUCLEOTIDE SEQUENCE [MRNA]</scope>
</reference>
<comment type="function">
    <text evidence="1">Component of the large ribosomal subunit. The ribosome is a large ribonucleoprotein complex responsible for the synthesis of proteins in the cell.</text>
</comment>
<comment type="subunit">
    <text evidence="1">Component of the large ribosomal subunit.</text>
</comment>
<comment type="subcellular location">
    <subcellularLocation>
        <location evidence="1">Cytoplasm</location>
    </subcellularLocation>
</comment>
<comment type="similarity">
    <text evidence="2">Belongs to the eukaryotic ribosomal protein eL31 family.</text>
</comment>
<feature type="chain" id="PRO_0000153768" description="Large ribosomal subunit protein eL31">
    <location>
        <begin position="1"/>
        <end position="125"/>
    </location>
</feature>
<evidence type="ECO:0000250" key="1">
    <source>
        <dbReference type="UniProtKB" id="P62899"/>
    </source>
</evidence>
<evidence type="ECO:0000305" key="2"/>
<proteinExistence type="evidence at transcript level"/>
<protein>
    <recommendedName>
        <fullName evidence="2">Large ribosomal subunit protein eL31</fullName>
    </recommendedName>
    <alternativeName>
        <fullName>60S ribosomal protein L31</fullName>
    </alternativeName>
</protein>
<keyword id="KW-0963">Cytoplasm</keyword>
<keyword id="KW-0687">Ribonucleoprotein</keyword>
<keyword id="KW-0689">Ribosomal protein</keyword>
<gene>
    <name type="primary">rpl31</name>
</gene>
<dbReference type="EMBL" id="AF401586">
    <property type="protein sequence ID" value="AAK95158.1"/>
    <property type="molecule type" value="mRNA"/>
</dbReference>
<dbReference type="RefSeq" id="NP_001187215.1">
    <property type="nucleotide sequence ID" value="NM_001200286.1"/>
</dbReference>
<dbReference type="RefSeq" id="XP_017324509.1">
    <property type="nucleotide sequence ID" value="XM_017469020.3"/>
</dbReference>
<dbReference type="RefSeq" id="XP_047011755.1">
    <property type="nucleotide sequence ID" value="XM_047155799.1"/>
</dbReference>
<dbReference type="SMR" id="Q90YT7"/>
<dbReference type="STRING" id="7998.ENSIPUP00000007470"/>
<dbReference type="Ensembl" id="ENSIPUT00015064881">
    <property type="protein sequence ID" value="ENSIPUP00015056993"/>
    <property type="gene ID" value="ENSIPUG00015025721"/>
</dbReference>
<dbReference type="GeneID" id="100305051"/>
<dbReference type="KEGG" id="ipu:100305051"/>
<dbReference type="CTD" id="6160"/>
<dbReference type="OMA" id="EVWKQGI"/>
<dbReference type="OrthoDB" id="9739313at2759"/>
<dbReference type="Proteomes" id="UP000221080">
    <property type="component" value="Chromosome 6"/>
</dbReference>
<dbReference type="GO" id="GO:0022625">
    <property type="term" value="C:cytosolic large ribosomal subunit"/>
    <property type="evidence" value="ECO:0007669"/>
    <property type="project" value="TreeGrafter"/>
</dbReference>
<dbReference type="GO" id="GO:0003735">
    <property type="term" value="F:structural constituent of ribosome"/>
    <property type="evidence" value="ECO:0007669"/>
    <property type="project" value="InterPro"/>
</dbReference>
<dbReference type="GO" id="GO:0002181">
    <property type="term" value="P:cytoplasmic translation"/>
    <property type="evidence" value="ECO:0007669"/>
    <property type="project" value="TreeGrafter"/>
</dbReference>
<dbReference type="CDD" id="cd00463">
    <property type="entry name" value="Ribosomal_L31e"/>
    <property type="match status" value="1"/>
</dbReference>
<dbReference type="FunFam" id="3.10.440.10:FF:000001">
    <property type="entry name" value="60S ribosomal protein L31"/>
    <property type="match status" value="1"/>
</dbReference>
<dbReference type="Gene3D" id="3.10.440.10">
    <property type="match status" value="1"/>
</dbReference>
<dbReference type="InterPro" id="IPR000054">
    <property type="entry name" value="Ribosomal_eL31"/>
</dbReference>
<dbReference type="InterPro" id="IPR020052">
    <property type="entry name" value="Ribosomal_eL31_CS"/>
</dbReference>
<dbReference type="InterPro" id="IPR023621">
    <property type="entry name" value="Ribosomal_eL31_dom_sf"/>
</dbReference>
<dbReference type="PANTHER" id="PTHR10956">
    <property type="entry name" value="60S RIBOSOMAL PROTEIN L31"/>
    <property type="match status" value="1"/>
</dbReference>
<dbReference type="PANTHER" id="PTHR10956:SF0">
    <property type="entry name" value="60S RIBOSOMAL PROTEIN L31"/>
    <property type="match status" value="1"/>
</dbReference>
<dbReference type="Pfam" id="PF01198">
    <property type="entry name" value="Ribosomal_L31e"/>
    <property type="match status" value="1"/>
</dbReference>
<dbReference type="SMART" id="SM01380">
    <property type="entry name" value="Ribosomal_L31e"/>
    <property type="match status" value="1"/>
</dbReference>
<dbReference type="SUPFAM" id="SSF54575">
    <property type="entry name" value="Ribosomal protein L31e"/>
    <property type="match status" value="1"/>
</dbReference>
<dbReference type="PROSITE" id="PS01144">
    <property type="entry name" value="RIBOSOMAL_L31E"/>
    <property type="match status" value="1"/>
</dbReference>
<accession>Q90YT7</accession>
<organism>
    <name type="scientific">Ictalurus punctatus</name>
    <name type="common">Channel catfish</name>
    <name type="synonym">Silurus punctatus</name>
    <dbReference type="NCBI Taxonomy" id="7998"/>
    <lineage>
        <taxon>Eukaryota</taxon>
        <taxon>Metazoa</taxon>
        <taxon>Chordata</taxon>
        <taxon>Craniata</taxon>
        <taxon>Vertebrata</taxon>
        <taxon>Euteleostomi</taxon>
        <taxon>Actinopterygii</taxon>
        <taxon>Neopterygii</taxon>
        <taxon>Teleostei</taxon>
        <taxon>Ostariophysi</taxon>
        <taxon>Siluriformes</taxon>
        <taxon>Ictaluridae</taxon>
        <taxon>Ictalurus</taxon>
    </lineage>
</organism>